<sequence>MNPLIAAASVIAAGLAVGLASIGPGVGQGTAAGQAVEGIARQPEAEGKIRGTLLLSLAFMEALTIYGLVVALALLFANPFV</sequence>
<protein>
    <recommendedName>
        <fullName evidence="1">ATP synthase subunit c, chloroplastic</fullName>
    </recommendedName>
    <alternativeName>
        <fullName evidence="1">ATP synthase F(0) sector subunit c</fullName>
    </alternativeName>
    <alternativeName>
        <fullName evidence="1">ATPase subunit III</fullName>
    </alternativeName>
    <alternativeName>
        <fullName evidence="1">F-type ATPase subunit c</fullName>
        <shortName evidence="1">F-ATPase subunit c</shortName>
    </alternativeName>
    <alternativeName>
        <fullName evidence="1">Lipid-binding protein</fullName>
    </alternativeName>
</protein>
<dbReference type="EMBL" id="X05254">
    <property type="protein sequence ID" value="CAA28875.1"/>
    <property type="molecule type" value="Genomic_DNA"/>
</dbReference>
<dbReference type="EMBL" id="M27557">
    <property type="protein sequence ID" value="AAA84473.1"/>
    <property type="molecule type" value="Genomic_DNA"/>
</dbReference>
<dbReference type="EMBL" id="X86563">
    <property type="protein sequence ID" value="CAA60281.1"/>
    <property type="molecule type" value="Genomic_DNA"/>
</dbReference>
<dbReference type="EMBL" id="X52270">
    <property type="protein sequence ID" value="CAA36514.1"/>
    <property type="molecule type" value="Genomic_DNA"/>
</dbReference>
<dbReference type="PIR" id="S07677">
    <property type="entry name" value="LWZMC"/>
</dbReference>
<dbReference type="RefSeq" id="NP_043020.1">
    <property type="nucleotide sequence ID" value="NC_001666.2"/>
</dbReference>
<dbReference type="SMR" id="P69449"/>
<dbReference type="FunCoup" id="P69449">
    <property type="interactions" value="249"/>
</dbReference>
<dbReference type="STRING" id="4577.P69449"/>
<dbReference type="PaxDb" id="4577-GRMZM2G458118_P01"/>
<dbReference type="GeneID" id="845173"/>
<dbReference type="KEGG" id="zma:845173"/>
<dbReference type="MaizeGDB" id="54734"/>
<dbReference type="eggNOG" id="KOG0232">
    <property type="taxonomic scope" value="Eukaryota"/>
</dbReference>
<dbReference type="InParanoid" id="P69449"/>
<dbReference type="OrthoDB" id="689995at2759"/>
<dbReference type="Proteomes" id="UP000007305">
    <property type="component" value="Chloroplast"/>
</dbReference>
<dbReference type="GO" id="GO:0009535">
    <property type="term" value="C:chloroplast thylakoid membrane"/>
    <property type="evidence" value="ECO:0007669"/>
    <property type="project" value="UniProtKB-SubCell"/>
</dbReference>
<dbReference type="GO" id="GO:0045259">
    <property type="term" value="C:proton-transporting ATP synthase complex"/>
    <property type="evidence" value="ECO:0007669"/>
    <property type="project" value="UniProtKB-KW"/>
</dbReference>
<dbReference type="GO" id="GO:0033177">
    <property type="term" value="C:proton-transporting two-sector ATPase complex, proton-transporting domain"/>
    <property type="evidence" value="ECO:0007669"/>
    <property type="project" value="InterPro"/>
</dbReference>
<dbReference type="GO" id="GO:0008289">
    <property type="term" value="F:lipid binding"/>
    <property type="evidence" value="ECO:0007669"/>
    <property type="project" value="UniProtKB-KW"/>
</dbReference>
<dbReference type="GO" id="GO:0046933">
    <property type="term" value="F:proton-transporting ATP synthase activity, rotational mechanism"/>
    <property type="evidence" value="ECO:0007669"/>
    <property type="project" value="UniProtKB-UniRule"/>
</dbReference>
<dbReference type="GO" id="GO:0015986">
    <property type="term" value="P:proton motive force-driven ATP synthesis"/>
    <property type="evidence" value="ECO:0000318"/>
    <property type="project" value="GO_Central"/>
</dbReference>
<dbReference type="CDD" id="cd18183">
    <property type="entry name" value="ATP-synt_Fo_c_ATPH"/>
    <property type="match status" value="1"/>
</dbReference>
<dbReference type="FunFam" id="1.20.20.10:FF:000001">
    <property type="entry name" value="ATP synthase subunit c, chloroplastic"/>
    <property type="match status" value="1"/>
</dbReference>
<dbReference type="Gene3D" id="1.20.20.10">
    <property type="entry name" value="F1F0 ATP synthase subunit C"/>
    <property type="match status" value="1"/>
</dbReference>
<dbReference type="HAMAP" id="MF_01396">
    <property type="entry name" value="ATP_synth_c_bact"/>
    <property type="match status" value="1"/>
</dbReference>
<dbReference type="InterPro" id="IPR005953">
    <property type="entry name" value="ATP_synth_csu_bac/chlpt"/>
</dbReference>
<dbReference type="InterPro" id="IPR000454">
    <property type="entry name" value="ATP_synth_F0_csu"/>
</dbReference>
<dbReference type="InterPro" id="IPR020537">
    <property type="entry name" value="ATP_synth_F0_csu_DDCD_BS"/>
</dbReference>
<dbReference type="InterPro" id="IPR038662">
    <property type="entry name" value="ATP_synth_F0_csu_sf"/>
</dbReference>
<dbReference type="InterPro" id="IPR002379">
    <property type="entry name" value="ATPase_proteolipid_c-like_dom"/>
</dbReference>
<dbReference type="InterPro" id="IPR035921">
    <property type="entry name" value="F/V-ATP_Csub_sf"/>
</dbReference>
<dbReference type="NCBIfam" id="TIGR01260">
    <property type="entry name" value="ATP_synt_c"/>
    <property type="match status" value="1"/>
</dbReference>
<dbReference type="NCBIfam" id="NF005608">
    <property type="entry name" value="PRK07354.1"/>
    <property type="match status" value="1"/>
</dbReference>
<dbReference type="PANTHER" id="PTHR10031">
    <property type="entry name" value="ATP SYNTHASE LIPID-BINDING PROTEIN, MITOCHONDRIAL"/>
    <property type="match status" value="1"/>
</dbReference>
<dbReference type="PANTHER" id="PTHR10031:SF0">
    <property type="entry name" value="ATPASE PROTEIN 9"/>
    <property type="match status" value="1"/>
</dbReference>
<dbReference type="Pfam" id="PF00137">
    <property type="entry name" value="ATP-synt_C"/>
    <property type="match status" value="1"/>
</dbReference>
<dbReference type="PRINTS" id="PR00124">
    <property type="entry name" value="ATPASEC"/>
</dbReference>
<dbReference type="SUPFAM" id="SSF81333">
    <property type="entry name" value="F1F0 ATP synthase subunit C"/>
    <property type="match status" value="1"/>
</dbReference>
<dbReference type="PROSITE" id="PS00605">
    <property type="entry name" value="ATPASE_C"/>
    <property type="match status" value="1"/>
</dbReference>
<gene>
    <name evidence="1" type="primary">atpH</name>
</gene>
<keyword id="KW-0066">ATP synthesis</keyword>
<keyword id="KW-0138">CF(0)</keyword>
<keyword id="KW-0150">Chloroplast</keyword>
<keyword id="KW-0375">Hydrogen ion transport</keyword>
<keyword id="KW-0406">Ion transport</keyword>
<keyword id="KW-0446">Lipid-binding</keyword>
<keyword id="KW-0472">Membrane</keyword>
<keyword id="KW-0934">Plastid</keyword>
<keyword id="KW-1185">Reference proteome</keyword>
<keyword id="KW-0793">Thylakoid</keyword>
<keyword id="KW-0812">Transmembrane</keyword>
<keyword id="KW-1133">Transmembrane helix</keyword>
<keyword id="KW-0813">Transport</keyword>
<feature type="chain" id="PRO_0000112191" description="ATP synthase subunit c, chloroplastic">
    <location>
        <begin position="1"/>
        <end position="81"/>
    </location>
</feature>
<feature type="transmembrane region" description="Helical" evidence="1">
    <location>
        <begin position="3"/>
        <end position="23"/>
    </location>
</feature>
<feature type="transmembrane region" description="Helical" evidence="1">
    <location>
        <begin position="57"/>
        <end position="77"/>
    </location>
</feature>
<feature type="site" description="Reversibly protonated during proton transport" evidence="1">
    <location>
        <position position="61"/>
    </location>
</feature>
<comment type="function">
    <text evidence="1">F(1)F(0) ATP synthase produces ATP from ADP in the presence of a proton or sodium gradient. F-type ATPases consist of two structural domains, F(1) containing the extramembraneous catalytic core and F(0) containing the membrane proton channel, linked together by a central stalk and a peripheral stalk. During catalysis, ATP synthesis in the catalytic domain of F(1) is coupled via a rotary mechanism of the central stalk subunits to proton translocation.</text>
</comment>
<comment type="function">
    <text evidence="1">Key component of the F(0) channel; it plays a direct role in translocation across the membrane. A homomeric c-ring of between 10-14 subunits forms the central stalk rotor element with the F(1) delta and epsilon subunits.</text>
</comment>
<comment type="subunit">
    <text evidence="1">F-type ATPases have 2 components, F(1) - the catalytic core - and F(0) - the membrane proton channel. F(1) has five subunits: alpha(3), beta(3), gamma(1), delta(1), epsilon(1). F(0) has four main subunits: a(1), b(1), b'(1) and c(10-14). The alpha and beta chains form an alternating ring which encloses part of the gamma chain. F(1) is attached to F(0) by a central stalk formed by the gamma and epsilon chains, while a peripheral stalk is formed by the delta, b and b' chains.</text>
</comment>
<comment type="subcellular location">
    <subcellularLocation>
        <location evidence="1">Plastid</location>
        <location evidence="1">Chloroplast thylakoid membrane</location>
        <topology evidence="1">Multi-pass membrane protein</topology>
    </subcellularLocation>
</comment>
<comment type="miscellaneous">
    <text>In plastids the F-type ATPase is also known as CF(1)CF(0).</text>
</comment>
<comment type="similarity">
    <text evidence="1">Belongs to the ATPase C chain family.</text>
</comment>
<reference key="1">
    <citation type="journal article" date="1987" name="Genetics">
        <title>Molecular evolution and nucleotide sequences of the maize plastid genes for the alpha subunit of CF1 (atpA) and the proteolipid subunit of CF0 (atpH).</title>
        <authorList>
            <person name="Rodermel S.R."/>
            <person name="Bogorao L."/>
        </authorList>
    </citation>
    <scope>NUCLEOTIDE SEQUENCE [GENOMIC DNA]</scope>
</reference>
<reference key="2">
    <citation type="journal article" date="1995" name="J. Mol. Biol.">
        <title>Complete sequence of the maize chloroplast genome: gene content, hotspots of divergence and fine tuning of genetic information by transcript editing.</title>
        <authorList>
            <person name="Maier R.M."/>
            <person name="Neckermann K."/>
            <person name="Igloi G.L."/>
            <person name="Koessel H."/>
        </authorList>
    </citation>
    <scope>NUCLEOTIDE SEQUENCE [LARGE SCALE GENOMIC DNA]</scope>
    <source>
        <strain>cv. B73</strain>
    </source>
</reference>
<reference key="3">
    <citation type="journal article" date="1990" name="Nucleic Acids Res.">
        <title>Nucleotide sequence of a 3.46 kb region of maize chloroplast DNA containing the gene cluster rpoC2-rps2-atpI-atpH.</title>
        <authorList>
            <person name="Stahl D."/>
            <person name="Rodermel S."/>
            <person name="Subramanian A.R."/>
            <person name="Bogorad L."/>
        </authorList>
    </citation>
    <scope>NUCLEOTIDE SEQUENCE [GENOMIC DNA] OF 1-3</scope>
    <source>
        <strain>cv. FR9cms X FR37</strain>
        <tissue>Leaf</tissue>
    </source>
</reference>
<name>ATPH_MAIZE</name>
<organism>
    <name type="scientific">Zea mays</name>
    <name type="common">Maize</name>
    <dbReference type="NCBI Taxonomy" id="4577"/>
    <lineage>
        <taxon>Eukaryota</taxon>
        <taxon>Viridiplantae</taxon>
        <taxon>Streptophyta</taxon>
        <taxon>Embryophyta</taxon>
        <taxon>Tracheophyta</taxon>
        <taxon>Spermatophyta</taxon>
        <taxon>Magnoliopsida</taxon>
        <taxon>Liliopsida</taxon>
        <taxon>Poales</taxon>
        <taxon>Poaceae</taxon>
        <taxon>PACMAD clade</taxon>
        <taxon>Panicoideae</taxon>
        <taxon>Andropogonodae</taxon>
        <taxon>Andropogoneae</taxon>
        <taxon>Tripsacinae</taxon>
        <taxon>Zea</taxon>
    </lineage>
</organism>
<proteinExistence type="inferred from homology"/>
<accession>P69449</accession>
<accession>P00843</accession>
<accession>Q33180</accession>
<accession>Q9XPT1</accession>
<geneLocation type="chloroplast"/>
<evidence type="ECO:0000255" key="1">
    <source>
        <dbReference type="HAMAP-Rule" id="MF_01396"/>
    </source>
</evidence>